<comment type="catalytic activity">
    <reaction evidence="1">
        <text>tRNA(Arg) + L-arginine + ATP = L-arginyl-tRNA(Arg) + AMP + diphosphate</text>
        <dbReference type="Rhea" id="RHEA:20301"/>
        <dbReference type="Rhea" id="RHEA-COMP:9658"/>
        <dbReference type="Rhea" id="RHEA-COMP:9673"/>
        <dbReference type="ChEBI" id="CHEBI:30616"/>
        <dbReference type="ChEBI" id="CHEBI:32682"/>
        <dbReference type="ChEBI" id="CHEBI:33019"/>
        <dbReference type="ChEBI" id="CHEBI:78442"/>
        <dbReference type="ChEBI" id="CHEBI:78513"/>
        <dbReference type="ChEBI" id="CHEBI:456215"/>
        <dbReference type="EC" id="6.1.1.19"/>
    </reaction>
</comment>
<comment type="subunit">
    <text evidence="1">Monomer.</text>
</comment>
<comment type="subcellular location">
    <subcellularLocation>
        <location evidence="1">Cytoplasm</location>
    </subcellularLocation>
</comment>
<comment type="similarity">
    <text evidence="1">Belongs to the class-I aminoacyl-tRNA synthetase family.</text>
</comment>
<accession>A7IN73</accession>
<sequence length="586" mass="63746">MNVYAIFADHVREAVAALVAEGIIAKDLDLARVVVEPPRDASHGDLATNAAMVLAKDAGLKPRELAERIAGKLGTVAGVKKVDVAGPGFINIALDGTFWPVVLAAVLTQGLDFGRSALGAGEKVNVEYVSANPTGPMHVGHCRGAVFGDALARLMDFAGFAVTKEYYINDAGAQVDVLARSAFLRYREALGEAIGEIPEGLYPGDYLVPVGQKLAAAHGPALKEKSETDWLPLVRAEAIATMMVAIREDLAALGISFDVFFSERSLSTGAVDRVGAAIEALRASGEVYEGRLPPPKGAPIEDWEDREQTLFRSTDFGDDVDRPLKKSDGSYTYFAGDIAYHKDKVDRGFLKMIDVWGADHGGYVKRMQAAVKAVSGGRATLDVELIQLVRLFRAGEPVRMSKRSGSFVTLREVVDEVGRDAVRFMMLFRKNDAPLDFDLAKVIEQSRENPVFYVQYAHARAKSILRNAAEEFADLPQQAASFATAPLARLDDEGEITLLRRLASWPRLVEQAAGAREPHRISFFLHELASEFHGQWNRGKDLPHLRFIIENDRELTSARLALVHGVATVLASGLKVLGVTAVDEMK</sequence>
<dbReference type="EC" id="6.1.1.19" evidence="1"/>
<dbReference type="EMBL" id="CP000781">
    <property type="protein sequence ID" value="ABS69466.1"/>
    <property type="molecule type" value="Genomic_DNA"/>
</dbReference>
<dbReference type="SMR" id="A7IN73"/>
<dbReference type="STRING" id="78245.Xaut_4245"/>
<dbReference type="KEGG" id="xau:Xaut_4245"/>
<dbReference type="eggNOG" id="COG0018">
    <property type="taxonomic scope" value="Bacteria"/>
</dbReference>
<dbReference type="HOGENOM" id="CLU_006406_0_1_5"/>
<dbReference type="OrthoDB" id="9803211at2"/>
<dbReference type="PhylomeDB" id="A7IN73"/>
<dbReference type="Proteomes" id="UP000002417">
    <property type="component" value="Chromosome"/>
</dbReference>
<dbReference type="GO" id="GO:0005737">
    <property type="term" value="C:cytoplasm"/>
    <property type="evidence" value="ECO:0007669"/>
    <property type="project" value="UniProtKB-SubCell"/>
</dbReference>
<dbReference type="GO" id="GO:0004814">
    <property type="term" value="F:arginine-tRNA ligase activity"/>
    <property type="evidence" value="ECO:0007669"/>
    <property type="project" value="UniProtKB-UniRule"/>
</dbReference>
<dbReference type="GO" id="GO:0005524">
    <property type="term" value="F:ATP binding"/>
    <property type="evidence" value="ECO:0007669"/>
    <property type="project" value="UniProtKB-UniRule"/>
</dbReference>
<dbReference type="GO" id="GO:0006420">
    <property type="term" value="P:arginyl-tRNA aminoacylation"/>
    <property type="evidence" value="ECO:0007669"/>
    <property type="project" value="UniProtKB-UniRule"/>
</dbReference>
<dbReference type="CDD" id="cd00671">
    <property type="entry name" value="ArgRS_core"/>
    <property type="match status" value="1"/>
</dbReference>
<dbReference type="FunFam" id="1.10.730.10:FF:000008">
    <property type="entry name" value="Arginine--tRNA ligase"/>
    <property type="match status" value="1"/>
</dbReference>
<dbReference type="FunFam" id="3.40.50.620:FF:000062">
    <property type="entry name" value="Arginine--tRNA ligase"/>
    <property type="match status" value="1"/>
</dbReference>
<dbReference type="Gene3D" id="3.30.1360.70">
    <property type="entry name" value="Arginyl tRNA synthetase N-terminal domain"/>
    <property type="match status" value="1"/>
</dbReference>
<dbReference type="Gene3D" id="3.40.50.620">
    <property type="entry name" value="HUPs"/>
    <property type="match status" value="1"/>
</dbReference>
<dbReference type="Gene3D" id="1.10.730.10">
    <property type="entry name" value="Isoleucyl-tRNA Synthetase, Domain 1"/>
    <property type="match status" value="1"/>
</dbReference>
<dbReference type="HAMAP" id="MF_00123">
    <property type="entry name" value="Arg_tRNA_synth"/>
    <property type="match status" value="1"/>
</dbReference>
<dbReference type="InterPro" id="IPR001412">
    <property type="entry name" value="aa-tRNA-synth_I_CS"/>
</dbReference>
<dbReference type="InterPro" id="IPR001278">
    <property type="entry name" value="Arg-tRNA-ligase"/>
</dbReference>
<dbReference type="InterPro" id="IPR005148">
    <property type="entry name" value="Arg-tRNA-synth_N"/>
</dbReference>
<dbReference type="InterPro" id="IPR036695">
    <property type="entry name" value="Arg-tRNA-synth_N_sf"/>
</dbReference>
<dbReference type="InterPro" id="IPR035684">
    <property type="entry name" value="ArgRS_core"/>
</dbReference>
<dbReference type="InterPro" id="IPR008909">
    <property type="entry name" value="DALR_anticod-bd"/>
</dbReference>
<dbReference type="InterPro" id="IPR014729">
    <property type="entry name" value="Rossmann-like_a/b/a_fold"/>
</dbReference>
<dbReference type="InterPro" id="IPR009080">
    <property type="entry name" value="tRNAsynth_Ia_anticodon-bd"/>
</dbReference>
<dbReference type="NCBIfam" id="TIGR00456">
    <property type="entry name" value="argS"/>
    <property type="match status" value="1"/>
</dbReference>
<dbReference type="PANTHER" id="PTHR11956:SF5">
    <property type="entry name" value="ARGININE--TRNA LIGASE, CYTOPLASMIC"/>
    <property type="match status" value="1"/>
</dbReference>
<dbReference type="PANTHER" id="PTHR11956">
    <property type="entry name" value="ARGINYL-TRNA SYNTHETASE"/>
    <property type="match status" value="1"/>
</dbReference>
<dbReference type="Pfam" id="PF03485">
    <property type="entry name" value="Arg_tRNA_synt_N"/>
    <property type="match status" value="1"/>
</dbReference>
<dbReference type="Pfam" id="PF05746">
    <property type="entry name" value="DALR_1"/>
    <property type="match status" value="1"/>
</dbReference>
<dbReference type="Pfam" id="PF00750">
    <property type="entry name" value="tRNA-synt_1d"/>
    <property type="match status" value="1"/>
</dbReference>
<dbReference type="PRINTS" id="PR01038">
    <property type="entry name" value="TRNASYNTHARG"/>
</dbReference>
<dbReference type="SMART" id="SM01016">
    <property type="entry name" value="Arg_tRNA_synt_N"/>
    <property type="match status" value="1"/>
</dbReference>
<dbReference type="SMART" id="SM00836">
    <property type="entry name" value="DALR_1"/>
    <property type="match status" value="1"/>
</dbReference>
<dbReference type="SUPFAM" id="SSF47323">
    <property type="entry name" value="Anticodon-binding domain of a subclass of class I aminoacyl-tRNA synthetases"/>
    <property type="match status" value="1"/>
</dbReference>
<dbReference type="SUPFAM" id="SSF55190">
    <property type="entry name" value="Arginyl-tRNA synthetase (ArgRS), N-terminal 'additional' domain"/>
    <property type="match status" value="1"/>
</dbReference>
<dbReference type="SUPFAM" id="SSF52374">
    <property type="entry name" value="Nucleotidylyl transferase"/>
    <property type="match status" value="1"/>
</dbReference>
<dbReference type="PROSITE" id="PS00178">
    <property type="entry name" value="AA_TRNA_LIGASE_I"/>
    <property type="match status" value="1"/>
</dbReference>
<name>SYR_XANP2</name>
<feature type="chain" id="PRO_1000095422" description="Arginine--tRNA ligase">
    <location>
        <begin position="1"/>
        <end position="586"/>
    </location>
</feature>
<feature type="short sequence motif" description="'HIGH' region">
    <location>
        <begin position="131"/>
        <end position="141"/>
    </location>
</feature>
<proteinExistence type="inferred from homology"/>
<gene>
    <name evidence="1" type="primary">argS</name>
    <name type="ordered locus">Xaut_4245</name>
</gene>
<evidence type="ECO:0000255" key="1">
    <source>
        <dbReference type="HAMAP-Rule" id="MF_00123"/>
    </source>
</evidence>
<keyword id="KW-0030">Aminoacyl-tRNA synthetase</keyword>
<keyword id="KW-0067">ATP-binding</keyword>
<keyword id="KW-0963">Cytoplasm</keyword>
<keyword id="KW-0436">Ligase</keyword>
<keyword id="KW-0547">Nucleotide-binding</keyword>
<keyword id="KW-0648">Protein biosynthesis</keyword>
<keyword id="KW-1185">Reference proteome</keyword>
<reference key="1">
    <citation type="submission" date="2007-07" db="EMBL/GenBank/DDBJ databases">
        <title>Complete sequence of chromosome of Xanthobacter autotrophicus Py2.</title>
        <authorList>
            <consortium name="US DOE Joint Genome Institute"/>
            <person name="Copeland A."/>
            <person name="Lucas S."/>
            <person name="Lapidus A."/>
            <person name="Barry K."/>
            <person name="Glavina del Rio T."/>
            <person name="Hammon N."/>
            <person name="Israni S."/>
            <person name="Dalin E."/>
            <person name="Tice H."/>
            <person name="Pitluck S."/>
            <person name="Sims D."/>
            <person name="Brettin T."/>
            <person name="Bruce D."/>
            <person name="Detter J.C."/>
            <person name="Han C."/>
            <person name="Tapia R."/>
            <person name="Brainard J."/>
            <person name="Schmutz J."/>
            <person name="Larimer F."/>
            <person name="Land M."/>
            <person name="Hauser L."/>
            <person name="Kyrpides N."/>
            <person name="Kim E."/>
            <person name="Ensigns S.A."/>
            <person name="Richardson P."/>
        </authorList>
    </citation>
    <scope>NUCLEOTIDE SEQUENCE [LARGE SCALE GENOMIC DNA]</scope>
    <source>
        <strain>ATCC BAA-1158 / Py2</strain>
    </source>
</reference>
<protein>
    <recommendedName>
        <fullName evidence="1">Arginine--tRNA ligase</fullName>
        <ecNumber evidence="1">6.1.1.19</ecNumber>
    </recommendedName>
    <alternativeName>
        <fullName evidence="1">Arginyl-tRNA synthetase</fullName>
        <shortName evidence="1">ArgRS</shortName>
    </alternativeName>
</protein>
<organism>
    <name type="scientific">Xanthobacter autotrophicus (strain ATCC BAA-1158 / Py2)</name>
    <dbReference type="NCBI Taxonomy" id="78245"/>
    <lineage>
        <taxon>Bacteria</taxon>
        <taxon>Pseudomonadati</taxon>
        <taxon>Pseudomonadota</taxon>
        <taxon>Alphaproteobacteria</taxon>
        <taxon>Hyphomicrobiales</taxon>
        <taxon>Xanthobacteraceae</taxon>
        <taxon>Xanthobacter</taxon>
    </lineage>
</organism>